<name>METK_ECOL6</name>
<sequence>MAKHLFTSESVSEGHPDKIADQISDAVLDAILEQDPKARVACETYVKTGMVLVGGEITTSAWVDIEEITRNTVREIGYVHSDMGFDANSCAVLSAIGKQSPDINQGVDRADPLEQGAGDQGLMFGYATNETDVLMPAPITYAHRLVQRQAEVRKNGTLPWLRPDAKSQVTFQYDDGKIVGIDAVVLSTQHSEEIDQKSLQEAVMEEIIKPILPAEWLTSATKFFINPTGRFVIGGPMGDCGLTGRKIIVDTYGGMARHGGGAFSGKDPSKVDRSAAYAARYVAKNIVAAGLADRCEIQVSYAIGVAEPTSIMVETFGTEKVPSEQLTLLVREFFDLRPYGLIQMLDLLHPIYKETAAYGHFGREHFPWEKTDKAQLLRDAAGLK</sequence>
<gene>
    <name evidence="2" type="primary">metK</name>
    <name type="ordered locus">c3528</name>
</gene>
<feature type="initiator methionine" description="Removed" evidence="1">
    <location>
        <position position="1"/>
    </location>
</feature>
<feature type="chain" id="PRO_0000174520" description="S-adenosylmethionine synthase">
    <location>
        <begin position="2"/>
        <end position="384"/>
    </location>
</feature>
<feature type="region of interest" description="Flexible loop" evidence="2">
    <location>
        <begin position="99"/>
        <end position="109"/>
    </location>
</feature>
<feature type="binding site" description="in other chain" evidence="2">
    <location>
        <position position="15"/>
    </location>
    <ligand>
        <name>ATP</name>
        <dbReference type="ChEBI" id="CHEBI:30616"/>
        <note>ligand shared between two neighboring subunits</note>
    </ligand>
</feature>
<feature type="binding site" evidence="2">
    <location>
        <position position="17"/>
    </location>
    <ligand>
        <name>Mg(2+)</name>
        <dbReference type="ChEBI" id="CHEBI:18420"/>
    </ligand>
</feature>
<feature type="binding site" evidence="2">
    <location>
        <position position="43"/>
    </location>
    <ligand>
        <name>K(+)</name>
        <dbReference type="ChEBI" id="CHEBI:29103"/>
    </ligand>
</feature>
<feature type="binding site" description="in other chain" evidence="2">
    <location>
        <position position="56"/>
    </location>
    <ligand>
        <name>L-methionine</name>
        <dbReference type="ChEBI" id="CHEBI:57844"/>
        <note>ligand shared between two neighboring subunits</note>
    </ligand>
</feature>
<feature type="binding site" description="in other chain" evidence="2">
    <location>
        <position position="99"/>
    </location>
    <ligand>
        <name>L-methionine</name>
        <dbReference type="ChEBI" id="CHEBI:57844"/>
        <note>ligand shared between two neighboring subunits</note>
    </ligand>
</feature>
<feature type="binding site" description="in other chain" evidence="2">
    <location>
        <begin position="164"/>
        <end position="166"/>
    </location>
    <ligand>
        <name>ATP</name>
        <dbReference type="ChEBI" id="CHEBI:30616"/>
        <note>ligand shared between two neighboring subunits</note>
    </ligand>
</feature>
<feature type="binding site" description="in other chain" evidence="2">
    <location>
        <begin position="230"/>
        <end position="231"/>
    </location>
    <ligand>
        <name>ATP</name>
        <dbReference type="ChEBI" id="CHEBI:30616"/>
        <note>ligand shared between two neighboring subunits</note>
    </ligand>
</feature>
<feature type="binding site" evidence="2">
    <location>
        <position position="239"/>
    </location>
    <ligand>
        <name>ATP</name>
        <dbReference type="ChEBI" id="CHEBI:30616"/>
        <note>ligand shared between two neighboring subunits</note>
    </ligand>
</feature>
<feature type="binding site" evidence="2">
    <location>
        <position position="239"/>
    </location>
    <ligand>
        <name>L-methionine</name>
        <dbReference type="ChEBI" id="CHEBI:57844"/>
        <note>ligand shared between two neighboring subunits</note>
    </ligand>
</feature>
<feature type="binding site" description="in other chain" evidence="2">
    <location>
        <begin position="245"/>
        <end position="246"/>
    </location>
    <ligand>
        <name>ATP</name>
        <dbReference type="ChEBI" id="CHEBI:30616"/>
        <note>ligand shared between two neighboring subunits</note>
    </ligand>
</feature>
<feature type="binding site" evidence="2">
    <location>
        <position position="262"/>
    </location>
    <ligand>
        <name>ATP</name>
        <dbReference type="ChEBI" id="CHEBI:30616"/>
        <note>ligand shared between two neighboring subunits</note>
    </ligand>
</feature>
<feature type="binding site" evidence="2">
    <location>
        <position position="266"/>
    </location>
    <ligand>
        <name>ATP</name>
        <dbReference type="ChEBI" id="CHEBI:30616"/>
        <note>ligand shared between two neighboring subunits</note>
    </ligand>
</feature>
<feature type="binding site" description="in other chain" evidence="2">
    <location>
        <position position="270"/>
    </location>
    <ligand>
        <name>L-methionine</name>
        <dbReference type="ChEBI" id="CHEBI:57844"/>
        <note>ligand shared between two neighboring subunits</note>
    </ligand>
</feature>
<keyword id="KW-0067">ATP-binding</keyword>
<keyword id="KW-0963">Cytoplasm</keyword>
<keyword id="KW-0460">Magnesium</keyword>
<keyword id="KW-0479">Metal-binding</keyword>
<keyword id="KW-0547">Nucleotide-binding</keyword>
<keyword id="KW-0554">One-carbon metabolism</keyword>
<keyword id="KW-0630">Potassium</keyword>
<keyword id="KW-1185">Reference proteome</keyword>
<keyword id="KW-0808">Transferase</keyword>
<proteinExistence type="inferred from homology"/>
<reference key="1">
    <citation type="journal article" date="2002" name="Proc. Natl. Acad. Sci. U.S.A.">
        <title>Extensive mosaic structure revealed by the complete genome sequence of uropathogenic Escherichia coli.</title>
        <authorList>
            <person name="Welch R.A."/>
            <person name="Burland V."/>
            <person name="Plunkett G. III"/>
            <person name="Redford P."/>
            <person name="Roesch P."/>
            <person name="Rasko D."/>
            <person name="Buckles E.L."/>
            <person name="Liou S.-R."/>
            <person name="Boutin A."/>
            <person name="Hackett J."/>
            <person name="Stroud D."/>
            <person name="Mayhew G.F."/>
            <person name="Rose D.J."/>
            <person name="Zhou S."/>
            <person name="Schwartz D.C."/>
            <person name="Perna N.T."/>
            <person name="Mobley H.L.T."/>
            <person name="Donnenberg M.S."/>
            <person name="Blattner F.R."/>
        </authorList>
    </citation>
    <scope>NUCLEOTIDE SEQUENCE [LARGE SCALE GENOMIC DNA]</scope>
    <source>
        <strain>CFT073 / ATCC 700928 / UPEC</strain>
    </source>
</reference>
<accession>P0A818</accession>
<accession>P04384</accession>
<accession>P30869</accession>
<protein>
    <recommendedName>
        <fullName evidence="2">S-adenosylmethionine synthase</fullName>
        <shortName evidence="2">AdoMet synthase</shortName>
        <ecNumber evidence="2">2.5.1.6</ecNumber>
    </recommendedName>
    <alternativeName>
        <fullName evidence="2">MAT</fullName>
    </alternativeName>
    <alternativeName>
        <fullName evidence="2">Methionine adenosyltransferase</fullName>
    </alternativeName>
</protein>
<dbReference type="EC" id="2.5.1.6" evidence="2"/>
<dbReference type="EMBL" id="AE014075">
    <property type="protein sequence ID" value="AAN81976.1"/>
    <property type="status" value="ALT_INIT"/>
    <property type="molecule type" value="Genomic_DNA"/>
</dbReference>
<dbReference type="RefSeq" id="WP_001062128.1">
    <property type="nucleotide sequence ID" value="NZ_CP051263.1"/>
</dbReference>
<dbReference type="SMR" id="P0A818"/>
<dbReference type="STRING" id="199310.c3528"/>
<dbReference type="GeneID" id="93779055"/>
<dbReference type="KEGG" id="ecc:c3528"/>
<dbReference type="eggNOG" id="COG0192">
    <property type="taxonomic scope" value="Bacteria"/>
</dbReference>
<dbReference type="HOGENOM" id="CLU_041802_1_1_6"/>
<dbReference type="UniPathway" id="UPA00315">
    <property type="reaction ID" value="UER00080"/>
</dbReference>
<dbReference type="Proteomes" id="UP000001410">
    <property type="component" value="Chromosome"/>
</dbReference>
<dbReference type="GO" id="GO:0005737">
    <property type="term" value="C:cytoplasm"/>
    <property type="evidence" value="ECO:0007669"/>
    <property type="project" value="UniProtKB-SubCell"/>
</dbReference>
<dbReference type="GO" id="GO:0005524">
    <property type="term" value="F:ATP binding"/>
    <property type="evidence" value="ECO:0007669"/>
    <property type="project" value="UniProtKB-UniRule"/>
</dbReference>
<dbReference type="GO" id="GO:0000287">
    <property type="term" value="F:magnesium ion binding"/>
    <property type="evidence" value="ECO:0007669"/>
    <property type="project" value="UniProtKB-UniRule"/>
</dbReference>
<dbReference type="GO" id="GO:0004478">
    <property type="term" value="F:methionine adenosyltransferase activity"/>
    <property type="evidence" value="ECO:0007669"/>
    <property type="project" value="UniProtKB-UniRule"/>
</dbReference>
<dbReference type="GO" id="GO:0006730">
    <property type="term" value="P:one-carbon metabolic process"/>
    <property type="evidence" value="ECO:0007669"/>
    <property type="project" value="UniProtKB-KW"/>
</dbReference>
<dbReference type="GO" id="GO:0006556">
    <property type="term" value="P:S-adenosylmethionine biosynthetic process"/>
    <property type="evidence" value="ECO:0007669"/>
    <property type="project" value="UniProtKB-UniRule"/>
</dbReference>
<dbReference type="CDD" id="cd18079">
    <property type="entry name" value="S-AdoMet_synt"/>
    <property type="match status" value="1"/>
</dbReference>
<dbReference type="FunFam" id="3.30.300.10:FF:000001">
    <property type="entry name" value="S-adenosylmethionine synthase"/>
    <property type="match status" value="1"/>
</dbReference>
<dbReference type="FunFam" id="3.30.300.10:FF:000003">
    <property type="entry name" value="S-adenosylmethionine synthase"/>
    <property type="match status" value="1"/>
</dbReference>
<dbReference type="Gene3D" id="3.30.300.10">
    <property type="match status" value="3"/>
</dbReference>
<dbReference type="HAMAP" id="MF_00086">
    <property type="entry name" value="S_AdoMet_synth1"/>
    <property type="match status" value="1"/>
</dbReference>
<dbReference type="InterPro" id="IPR022631">
    <property type="entry name" value="ADOMET_SYNTHASE_CS"/>
</dbReference>
<dbReference type="InterPro" id="IPR022630">
    <property type="entry name" value="S-AdoMet_synt_C"/>
</dbReference>
<dbReference type="InterPro" id="IPR022629">
    <property type="entry name" value="S-AdoMet_synt_central"/>
</dbReference>
<dbReference type="InterPro" id="IPR022628">
    <property type="entry name" value="S-AdoMet_synt_N"/>
</dbReference>
<dbReference type="InterPro" id="IPR002133">
    <property type="entry name" value="S-AdoMet_synthetase"/>
</dbReference>
<dbReference type="InterPro" id="IPR022636">
    <property type="entry name" value="S-AdoMet_synthetase_sfam"/>
</dbReference>
<dbReference type="NCBIfam" id="TIGR01034">
    <property type="entry name" value="metK"/>
    <property type="match status" value="1"/>
</dbReference>
<dbReference type="PANTHER" id="PTHR11964">
    <property type="entry name" value="S-ADENOSYLMETHIONINE SYNTHETASE"/>
    <property type="match status" value="1"/>
</dbReference>
<dbReference type="Pfam" id="PF02773">
    <property type="entry name" value="S-AdoMet_synt_C"/>
    <property type="match status" value="1"/>
</dbReference>
<dbReference type="Pfam" id="PF02772">
    <property type="entry name" value="S-AdoMet_synt_M"/>
    <property type="match status" value="1"/>
</dbReference>
<dbReference type="Pfam" id="PF00438">
    <property type="entry name" value="S-AdoMet_synt_N"/>
    <property type="match status" value="1"/>
</dbReference>
<dbReference type="PIRSF" id="PIRSF000497">
    <property type="entry name" value="MAT"/>
    <property type="match status" value="1"/>
</dbReference>
<dbReference type="SUPFAM" id="SSF55973">
    <property type="entry name" value="S-adenosylmethionine synthetase"/>
    <property type="match status" value="3"/>
</dbReference>
<dbReference type="PROSITE" id="PS00376">
    <property type="entry name" value="ADOMET_SYNTHASE_1"/>
    <property type="match status" value="1"/>
</dbReference>
<dbReference type="PROSITE" id="PS00377">
    <property type="entry name" value="ADOMET_SYNTHASE_2"/>
    <property type="match status" value="1"/>
</dbReference>
<comment type="function">
    <text evidence="2">Catalyzes the formation of S-adenosylmethionine (AdoMet) from methionine and ATP. The overall synthetic reaction is composed of two sequential steps, AdoMet formation and the subsequent tripolyphosphate hydrolysis which occurs prior to release of AdoMet from the enzyme.</text>
</comment>
<comment type="catalytic activity">
    <reaction evidence="2">
        <text>L-methionine + ATP + H2O = S-adenosyl-L-methionine + phosphate + diphosphate</text>
        <dbReference type="Rhea" id="RHEA:21080"/>
        <dbReference type="ChEBI" id="CHEBI:15377"/>
        <dbReference type="ChEBI" id="CHEBI:30616"/>
        <dbReference type="ChEBI" id="CHEBI:33019"/>
        <dbReference type="ChEBI" id="CHEBI:43474"/>
        <dbReference type="ChEBI" id="CHEBI:57844"/>
        <dbReference type="ChEBI" id="CHEBI:59789"/>
        <dbReference type="EC" id="2.5.1.6"/>
    </reaction>
</comment>
<comment type="cofactor">
    <cofactor evidence="2">
        <name>Mg(2+)</name>
        <dbReference type="ChEBI" id="CHEBI:18420"/>
    </cofactor>
    <text evidence="2">Binds 2 divalent ions per subunit.</text>
</comment>
<comment type="cofactor">
    <cofactor evidence="2">
        <name>K(+)</name>
        <dbReference type="ChEBI" id="CHEBI:29103"/>
    </cofactor>
    <text evidence="2">Binds 1 potassium ion per subunit.</text>
</comment>
<comment type="pathway">
    <text evidence="2">Amino-acid biosynthesis; S-adenosyl-L-methionine biosynthesis; S-adenosyl-L-methionine from L-methionine: step 1/1.</text>
</comment>
<comment type="subunit">
    <text evidence="2">Homotetramer; dimer of dimers.</text>
</comment>
<comment type="subcellular location">
    <subcellularLocation>
        <location evidence="2">Cytoplasm</location>
    </subcellularLocation>
</comment>
<comment type="similarity">
    <text evidence="2">Belongs to the AdoMet synthase family.</text>
</comment>
<comment type="sequence caution" evidence="3">
    <conflict type="erroneous initiation">
        <sequence resource="EMBL-CDS" id="AAN81976"/>
    </conflict>
</comment>
<organism>
    <name type="scientific">Escherichia coli O6:H1 (strain CFT073 / ATCC 700928 / UPEC)</name>
    <dbReference type="NCBI Taxonomy" id="199310"/>
    <lineage>
        <taxon>Bacteria</taxon>
        <taxon>Pseudomonadati</taxon>
        <taxon>Pseudomonadota</taxon>
        <taxon>Gammaproteobacteria</taxon>
        <taxon>Enterobacterales</taxon>
        <taxon>Enterobacteriaceae</taxon>
        <taxon>Escherichia</taxon>
    </lineage>
</organism>
<evidence type="ECO:0000250" key="1"/>
<evidence type="ECO:0000255" key="2">
    <source>
        <dbReference type="HAMAP-Rule" id="MF_00086"/>
    </source>
</evidence>
<evidence type="ECO:0000305" key="3"/>